<gene>
    <name evidence="1" type="primary">hmgA</name>
    <name type="ordered locus">PP_4621</name>
</gene>
<feature type="chain" id="PRO_0000220250" description="Homogentisate 1,2-dioxygenase">
    <location>
        <begin position="1"/>
        <end position="433"/>
    </location>
</feature>
<feature type="active site" description="Proton acceptor" evidence="1 3">
    <location>
        <position position="288"/>
    </location>
</feature>
<feature type="binding site">
    <location>
        <position position="331"/>
    </location>
    <ligand>
        <name>Fe cation</name>
        <dbReference type="ChEBI" id="CHEBI:24875"/>
    </ligand>
</feature>
<feature type="binding site">
    <location>
        <position position="337"/>
    </location>
    <ligand>
        <name>Fe cation</name>
        <dbReference type="ChEBI" id="CHEBI:24875"/>
    </ligand>
</feature>
<feature type="binding site" evidence="1 3">
    <location>
        <position position="346"/>
    </location>
    <ligand>
        <name>homogentisate</name>
        <dbReference type="ChEBI" id="CHEBI:16169"/>
    </ligand>
</feature>
<feature type="binding site">
    <location>
        <position position="367"/>
    </location>
    <ligand>
        <name>Fe cation</name>
        <dbReference type="ChEBI" id="CHEBI:24875"/>
    </ligand>
</feature>
<feature type="binding site" evidence="1 3">
    <location>
        <position position="367"/>
    </location>
    <ligand>
        <name>homogentisate</name>
        <dbReference type="ChEBI" id="CHEBI:16169"/>
    </ligand>
</feature>
<feature type="mutagenesis site" description="Reduces the catalytic efficiency 75-fold." evidence="3">
    <original>H</original>
    <variation>F</variation>
    <location>
        <position position="288"/>
    </location>
</feature>
<feature type="mutagenesis site" description="Decreases the affinity for homogentisate more than 60-fold and reduces the catalytic efficiency 20-fold." evidence="3">
    <original>Y</original>
    <variation>F</variation>
    <location>
        <position position="346"/>
    </location>
</feature>
<feature type="strand" evidence="4">
    <location>
        <begin position="11"/>
        <end position="13"/>
    </location>
</feature>
<feature type="strand" evidence="4">
    <location>
        <begin position="19"/>
        <end position="24"/>
    </location>
</feature>
<feature type="strand" evidence="4">
    <location>
        <begin position="35"/>
        <end position="37"/>
    </location>
</feature>
<feature type="helix" evidence="4">
    <location>
        <begin position="39"/>
        <end position="41"/>
    </location>
</feature>
<feature type="strand" evidence="4">
    <location>
        <begin position="43"/>
        <end position="48"/>
    </location>
</feature>
<feature type="helix" evidence="4">
    <location>
        <begin position="56"/>
        <end position="58"/>
    </location>
</feature>
<feature type="strand" evidence="4">
    <location>
        <begin position="61"/>
        <end position="68"/>
    </location>
</feature>
<feature type="strand" evidence="4">
    <location>
        <begin position="96"/>
        <end position="98"/>
    </location>
</feature>
<feature type="turn" evidence="4">
    <location>
        <begin position="110"/>
        <end position="112"/>
    </location>
</feature>
<feature type="strand" evidence="4">
    <location>
        <begin position="114"/>
        <end position="121"/>
    </location>
</feature>
<feature type="strand" evidence="4">
    <location>
        <begin position="128"/>
        <end position="138"/>
    </location>
</feature>
<feature type="strand" evidence="4">
    <location>
        <begin position="141"/>
        <end position="148"/>
    </location>
</feature>
<feature type="strand" evidence="4">
    <location>
        <begin position="150"/>
        <end position="158"/>
    </location>
</feature>
<feature type="strand" evidence="4">
    <location>
        <begin position="160"/>
        <end position="164"/>
    </location>
</feature>
<feature type="strand" evidence="4">
    <location>
        <begin position="167"/>
        <end position="171"/>
    </location>
</feature>
<feature type="strand" evidence="4">
    <location>
        <begin position="175"/>
        <end position="179"/>
    </location>
</feature>
<feature type="strand" evidence="4">
    <location>
        <begin position="185"/>
        <end position="189"/>
    </location>
</feature>
<feature type="strand" evidence="4">
    <location>
        <begin position="194"/>
        <end position="201"/>
    </location>
</feature>
<feature type="helix" evidence="4">
    <location>
        <begin position="212"/>
        <end position="214"/>
    </location>
</feature>
<feature type="helix" evidence="4">
    <location>
        <begin position="222"/>
        <end position="224"/>
    </location>
</feature>
<feature type="strand" evidence="4">
    <location>
        <begin position="226"/>
        <end position="228"/>
    </location>
</feature>
<feature type="strand" evidence="4">
    <location>
        <begin position="236"/>
        <end position="245"/>
    </location>
</feature>
<feature type="strand" evidence="4">
    <location>
        <begin position="248"/>
        <end position="256"/>
    </location>
</feature>
<feature type="strand" evidence="4">
    <location>
        <begin position="261"/>
        <end position="267"/>
    </location>
</feature>
<feature type="strand" evidence="4">
    <location>
        <begin position="271"/>
        <end position="274"/>
    </location>
</feature>
<feature type="helix" evidence="4">
    <location>
        <begin position="275"/>
        <end position="277"/>
    </location>
</feature>
<feature type="strand" evidence="4">
    <location>
        <begin position="281"/>
        <end position="287"/>
    </location>
</feature>
<feature type="helix" evidence="4">
    <location>
        <begin position="291"/>
        <end position="294"/>
    </location>
</feature>
<feature type="strand" evidence="4">
    <location>
        <begin position="295"/>
        <end position="299"/>
    </location>
</feature>
<feature type="strand" evidence="4">
    <location>
        <begin position="308"/>
        <end position="314"/>
    </location>
</feature>
<feature type="strand" evidence="4">
    <location>
        <begin position="316"/>
        <end position="319"/>
    </location>
</feature>
<feature type="strand" evidence="4">
    <location>
        <begin position="330"/>
        <end position="344"/>
    </location>
</feature>
<feature type="strand" evidence="4">
    <location>
        <begin position="350"/>
        <end position="352"/>
    </location>
</feature>
<feature type="strand" evidence="4">
    <location>
        <begin position="358"/>
        <end position="361"/>
    </location>
</feature>
<feature type="helix" evidence="4">
    <location>
        <begin position="371"/>
        <end position="379"/>
    </location>
</feature>
<feature type="strand" evidence="4">
    <location>
        <begin position="385"/>
        <end position="387"/>
    </location>
</feature>
<feature type="strand" evidence="4">
    <location>
        <begin position="391"/>
        <end position="399"/>
    </location>
</feature>
<feature type="strand" evidence="5">
    <location>
        <begin position="402"/>
        <end position="404"/>
    </location>
</feature>
<feature type="helix" evidence="4">
    <location>
        <begin position="405"/>
        <end position="409"/>
    </location>
</feature>
<feature type="helix" evidence="4">
    <location>
        <begin position="417"/>
        <end position="421"/>
    </location>
</feature>
<accession>Q88E47</accession>
<proteinExistence type="evidence at protein level"/>
<keyword id="KW-0002">3D-structure</keyword>
<keyword id="KW-0223">Dioxygenase</keyword>
<keyword id="KW-0408">Iron</keyword>
<keyword id="KW-0479">Metal-binding</keyword>
<keyword id="KW-0560">Oxidoreductase</keyword>
<keyword id="KW-0585">Phenylalanine catabolism</keyword>
<keyword id="KW-1185">Reference proteome</keyword>
<keyword id="KW-0828">Tyrosine catabolism</keyword>
<sequence>MNRDTSPDLHYLSGFGNEFASEALPGALPVGQNSPQKAPYGLYAELLSGTAFTMARSELRRTWLYRIRPSALHPRFERLARQPLGGPLGGINPNRLRWSPQPIPAEPTDFIEGWLPMAANAGAEKPAGVSIYIYRANRSMERVFFNADGELLLVPEQGRLRIATELGVMEVEPLEIAVIPRGMKFRVELLDGQARGYIAENHGAPLRLPDLGPIGSNGLANPRDFLTPVAHYEEAEGPVQLVQKFLGEHWACELQHSPLDVVAWHGSNVPYKYDLRRFNTIGTVSFDHPDPSIFTVLTSPTSVHGMANMDFVIFPPRWMVAENTFRPPWFHRNLMNEFMGLINGAYDAKAEGFLPGGASLHGVMSAHGPDAETCEKAIAADLAPHKIDNTMAFMFETSQVLRPSLQALECPQLQADYDSCWATLPSTFNPNRR</sequence>
<reference key="1">
    <citation type="journal article" date="2002" name="Environ. Microbiol.">
        <title>Complete genome sequence and comparative analysis of the metabolically versatile Pseudomonas putida KT2440.</title>
        <authorList>
            <person name="Nelson K.E."/>
            <person name="Weinel C."/>
            <person name="Paulsen I.T."/>
            <person name="Dodson R.J."/>
            <person name="Hilbert H."/>
            <person name="Martins dos Santos V.A.P."/>
            <person name="Fouts D.E."/>
            <person name="Gill S.R."/>
            <person name="Pop M."/>
            <person name="Holmes M."/>
            <person name="Brinkac L.M."/>
            <person name="Beanan M.J."/>
            <person name="DeBoy R.T."/>
            <person name="Daugherty S.C."/>
            <person name="Kolonay J.F."/>
            <person name="Madupu R."/>
            <person name="Nelson W.C."/>
            <person name="White O."/>
            <person name="Peterson J.D."/>
            <person name="Khouri H.M."/>
            <person name="Hance I."/>
            <person name="Chris Lee P."/>
            <person name="Holtzapple E.K."/>
            <person name="Scanlan D."/>
            <person name="Tran K."/>
            <person name="Moazzez A."/>
            <person name="Utterback T.R."/>
            <person name="Rizzo M."/>
            <person name="Lee K."/>
            <person name="Kosack D."/>
            <person name="Moestl D."/>
            <person name="Wedler H."/>
            <person name="Lauber J."/>
            <person name="Stjepandic D."/>
            <person name="Hoheisel J."/>
            <person name="Straetz M."/>
            <person name="Heim S."/>
            <person name="Kiewitz C."/>
            <person name="Eisen J.A."/>
            <person name="Timmis K.N."/>
            <person name="Duesterhoeft A."/>
            <person name="Tuemmler B."/>
            <person name="Fraser C.M."/>
        </authorList>
    </citation>
    <scope>NUCLEOTIDE SEQUENCE [LARGE SCALE GENOMIC DNA]</scope>
    <source>
        <strain>ATCC 47054 / DSM 6125 / CFBP 8728 / NCIMB 11950 / KT2440</strain>
    </source>
</reference>
<reference key="2">
    <citation type="journal article" date="2004" name="J. Bacteriol.">
        <title>The homogentisate pathway: a central catabolic pathway involved in the degradation of L-phenylalanine, L-tyrosine, and 3-hydroxyphenylacetate in Pseudomonas putida.</title>
        <authorList>
            <person name="Arias-Barrau E."/>
            <person name="Olivera E.R."/>
            <person name="Luengo J.M."/>
            <person name="Fernandez C."/>
            <person name="Galan B."/>
            <person name="Garcia J.L."/>
            <person name="Diaz E."/>
            <person name="Minambres B."/>
        </authorList>
    </citation>
    <scope>FUNCTION</scope>
    <scope>BIOPHYSICOCHEMICAL PROPERTIES</scope>
    <source>
        <strain>U</strain>
    </source>
</reference>
<reference key="3">
    <citation type="journal article" date="2013" name="Proc. Natl. Acad. Sci. U.S.A.">
        <title>Visualizing the substrate-, superoxo-, alkylperoxo-, and product-bound states at the nonheme Fe(II) site of homogentisate dioxygenase.</title>
        <authorList>
            <person name="Jeoung J.H."/>
            <person name="Bommer M."/>
            <person name="Lin T.Y."/>
            <person name="Dobbek H."/>
        </authorList>
    </citation>
    <scope>X-RAY CRYSTALLOGRAPHY (1.7 ANGSTROMS) IN COMPLEX WITH HOMOGENTISATE AND IRON IONS</scope>
    <scope>FUNCTION</scope>
    <scope>CATALYTIC ACTIVITY</scope>
    <scope>MUTAGENESIS OF HIS-288 AND TYR-346</scope>
    <scope>ACTIVE SITE</scope>
    <scope>BIOPHYSICOCHEMICAL PROPERTIES</scope>
    <scope>COFACTOR</scope>
    <scope>REACTION MECHANISM</scope>
    <scope>SUBUNIT</scope>
</reference>
<dbReference type="EC" id="1.13.11.5" evidence="1"/>
<dbReference type="EMBL" id="AE015451">
    <property type="protein sequence ID" value="AAN70194.1"/>
    <property type="molecule type" value="Genomic_DNA"/>
</dbReference>
<dbReference type="RefSeq" id="NP_746730.1">
    <property type="nucleotide sequence ID" value="NC_002947.4"/>
</dbReference>
<dbReference type="RefSeq" id="WP_010955283.1">
    <property type="nucleotide sequence ID" value="NZ_CP169744.1"/>
</dbReference>
<dbReference type="PDB" id="3ZDS">
    <property type="method" value="X-ray"/>
    <property type="resolution" value="1.70 A"/>
    <property type="chains" value="A/B/C/D/E/F/G/H/I/J/K/L=1-433"/>
</dbReference>
<dbReference type="PDB" id="4AQ2">
    <property type="method" value="X-ray"/>
    <property type="resolution" value="1.95 A"/>
    <property type="chains" value="A/B/C/D/E/F/G/H/I/J/K/L=1-433"/>
</dbReference>
<dbReference type="PDB" id="4AQ6">
    <property type="method" value="X-ray"/>
    <property type="resolution" value="1.98 A"/>
    <property type="chains" value="A/B/C/D/E/F/G/H/I/J/K/L=1-433"/>
</dbReference>
<dbReference type="PDBsum" id="3ZDS"/>
<dbReference type="PDBsum" id="4AQ2"/>
<dbReference type="PDBsum" id="4AQ6"/>
<dbReference type="SMR" id="Q88E47"/>
<dbReference type="STRING" id="160488.PP_4621"/>
<dbReference type="PaxDb" id="160488-PP_4621"/>
<dbReference type="GeneID" id="83682326"/>
<dbReference type="KEGG" id="ppu:PP_4621"/>
<dbReference type="PATRIC" id="fig|160488.4.peg.4927"/>
<dbReference type="eggNOG" id="COG3508">
    <property type="taxonomic scope" value="Bacteria"/>
</dbReference>
<dbReference type="HOGENOM" id="CLU_027174_0_0_6"/>
<dbReference type="OrthoDB" id="9811253at2"/>
<dbReference type="PhylomeDB" id="Q88E47"/>
<dbReference type="BioCyc" id="PPUT160488:G1G01-4932-MONOMER"/>
<dbReference type="BRENDA" id="1.13.11.5">
    <property type="organism ID" value="5092"/>
</dbReference>
<dbReference type="UniPathway" id="UPA00139">
    <property type="reaction ID" value="UER00339"/>
</dbReference>
<dbReference type="EvolutionaryTrace" id="Q88E47"/>
<dbReference type="Proteomes" id="UP000000556">
    <property type="component" value="Chromosome"/>
</dbReference>
<dbReference type="GO" id="GO:0005737">
    <property type="term" value="C:cytoplasm"/>
    <property type="evidence" value="ECO:0007669"/>
    <property type="project" value="TreeGrafter"/>
</dbReference>
<dbReference type="GO" id="GO:0032993">
    <property type="term" value="C:protein-DNA complex"/>
    <property type="evidence" value="ECO:0000353"/>
    <property type="project" value="CollecTF"/>
</dbReference>
<dbReference type="GO" id="GO:0001217">
    <property type="term" value="F:DNA-binding transcription repressor activity"/>
    <property type="evidence" value="ECO:0000353"/>
    <property type="project" value="CollecTF"/>
</dbReference>
<dbReference type="GO" id="GO:0004411">
    <property type="term" value="F:homogentisate 1,2-dioxygenase activity"/>
    <property type="evidence" value="ECO:0000314"/>
    <property type="project" value="UniProtKB"/>
</dbReference>
<dbReference type="GO" id="GO:0005506">
    <property type="term" value="F:iron ion binding"/>
    <property type="evidence" value="ECO:0000314"/>
    <property type="project" value="UniProtKB"/>
</dbReference>
<dbReference type="GO" id="GO:0000976">
    <property type="term" value="F:transcription cis-regulatory region binding"/>
    <property type="evidence" value="ECO:0000353"/>
    <property type="project" value="CollecTF"/>
</dbReference>
<dbReference type="GO" id="GO:0006559">
    <property type="term" value="P:L-phenylalanine catabolic process"/>
    <property type="evidence" value="ECO:0000314"/>
    <property type="project" value="UniProtKB"/>
</dbReference>
<dbReference type="GO" id="GO:0045892">
    <property type="term" value="P:negative regulation of DNA-templated transcription"/>
    <property type="evidence" value="ECO:0000314"/>
    <property type="project" value="CollecTF"/>
</dbReference>
<dbReference type="GO" id="GO:0006572">
    <property type="term" value="P:tyrosine catabolic process"/>
    <property type="evidence" value="ECO:0000314"/>
    <property type="project" value="UniProtKB"/>
</dbReference>
<dbReference type="CDD" id="cd07000">
    <property type="entry name" value="cupin_HGO_N"/>
    <property type="match status" value="1"/>
</dbReference>
<dbReference type="FunFam" id="2.60.120.10:FF:000036">
    <property type="entry name" value="Homogentisate 1,2-dioxygenase"/>
    <property type="match status" value="1"/>
</dbReference>
<dbReference type="Gene3D" id="2.60.120.10">
    <property type="entry name" value="Jelly Rolls"/>
    <property type="match status" value="1"/>
</dbReference>
<dbReference type="HAMAP" id="MF_00334">
    <property type="entry name" value="Homogentis_dioxygen"/>
    <property type="match status" value="1"/>
</dbReference>
<dbReference type="InterPro" id="IPR046451">
    <property type="entry name" value="HgmA_C"/>
</dbReference>
<dbReference type="InterPro" id="IPR046452">
    <property type="entry name" value="HgmA_N"/>
</dbReference>
<dbReference type="InterPro" id="IPR005708">
    <property type="entry name" value="Homogentis_dOase"/>
</dbReference>
<dbReference type="InterPro" id="IPR022950">
    <property type="entry name" value="Homogentis_dOase_bac"/>
</dbReference>
<dbReference type="InterPro" id="IPR014710">
    <property type="entry name" value="RmlC-like_jellyroll"/>
</dbReference>
<dbReference type="InterPro" id="IPR011051">
    <property type="entry name" value="RmlC_Cupin_sf"/>
</dbReference>
<dbReference type="NCBIfam" id="TIGR01015">
    <property type="entry name" value="hmgA"/>
    <property type="match status" value="1"/>
</dbReference>
<dbReference type="PANTHER" id="PTHR11056">
    <property type="entry name" value="HOMOGENTISATE 1,2-DIOXYGENASE"/>
    <property type="match status" value="1"/>
</dbReference>
<dbReference type="PANTHER" id="PTHR11056:SF0">
    <property type="entry name" value="HOMOGENTISATE 1,2-DIOXYGENASE"/>
    <property type="match status" value="1"/>
</dbReference>
<dbReference type="Pfam" id="PF04209">
    <property type="entry name" value="HgmA_C"/>
    <property type="match status" value="1"/>
</dbReference>
<dbReference type="Pfam" id="PF20510">
    <property type="entry name" value="HgmA_N"/>
    <property type="match status" value="1"/>
</dbReference>
<dbReference type="SUPFAM" id="SSF51182">
    <property type="entry name" value="RmlC-like cupins"/>
    <property type="match status" value="1"/>
</dbReference>
<comment type="function">
    <text evidence="2 3">Involved in the catabolism of homogentisate (2,5-dihydroxyphenylacetate or 2,5-OH-PhAc), a central intermediate in the degradation of phenylalanine and tyrosine. Catalyzes the oxidative ring cleavage of the ar omatic ring of 2,5-dihydroxyphenylacetate to yield maleylacetoacetate.</text>
</comment>
<comment type="catalytic activity">
    <reaction evidence="1 3">
        <text>homogentisate + O2 = 4-maleylacetoacetate + H(+)</text>
        <dbReference type="Rhea" id="RHEA:15449"/>
        <dbReference type="ChEBI" id="CHEBI:15378"/>
        <dbReference type="ChEBI" id="CHEBI:15379"/>
        <dbReference type="ChEBI" id="CHEBI:16169"/>
        <dbReference type="ChEBI" id="CHEBI:17105"/>
        <dbReference type="EC" id="1.13.11.5"/>
    </reaction>
</comment>
<comment type="cofactor">
    <cofactor evidence="1 3">
        <name>Fe cation</name>
        <dbReference type="ChEBI" id="CHEBI:24875"/>
    </cofactor>
</comment>
<comment type="biophysicochemical properties">
    <kinetics>
        <KM evidence="2 3">53.2 uM for homogentisate</KM>
        <Vmax evidence="2 3">99.4 umol/min/mg enzyme</Vmax>
        <text>kcat is 79.5 sec(-1) for the oxidative ring cleavage of homogentisate.</text>
    </kinetics>
    <temperatureDependence>
        <text evidence="2 3">Optimum temperature is 37 degrees Celsius.</text>
    </temperatureDependence>
</comment>
<comment type="pathway">
    <text evidence="1">Amino-acid degradation; L-phenylalanine degradation; acetoacetate and fumarate from L-phenylalanine: step 4/6.</text>
</comment>
<comment type="subunit">
    <text evidence="1 3">Hexamer; dimer of trimers.</text>
</comment>
<comment type="induction">
    <text>Induced by homogentisate and repressed by HmgR.</text>
</comment>
<comment type="similarity">
    <text evidence="1">Belongs to the homogentisate dioxygenase family.</text>
</comment>
<name>HGD_PSEPK</name>
<protein>
    <recommendedName>
        <fullName evidence="1">Homogentisate 1,2-dioxygenase</fullName>
        <shortName evidence="1">HGDO</shortName>
        <ecNumber evidence="1">1.13.11.5</ecNumber>
    </recommendedName>
    <alternativeName>
        <fullName evidence="1">Homogentisate oxygenase</fullName>
    </alternativeName>
    <alternativeName>
        <fullName evidence="1">Homogentisic acid oxidase</fullName>
    </alternativeName>
    <alternativeName>
        <fullName evidence="1">Homogentisicase</fullName>
    </alternativeName>
</protein>
<evidence type="ECO:0000255" key="1">
    <source>
        <dbReference type="HAMAP-Rule" id="MF_00334"/>
    </source>
</evidence>
<evidence type="ECO:0000269" key="2">
    <source>
    </source>
</evidence>
<evidence type="ECO:0000269" key="3">
    <source>
    </source>
</evidence>
<evidence type="ECO:0007829" key="4">
    <source>
        <dbReference type="PDB" id="3ZDS"/>
    </source>
</evidence>
<evidence type="ECO:0007829" key="5">
    <source>
        <dbReference type="PDB" id="4AQ2"/>
    </source>
</evidence>
<organism>
    <name type="scientific">Pseudomonas putida (strain ATCC 47054 / DSM 6125 / CFBP 8728 / NCIMB 11950 / KT2440)</name>
    <dbReference type="NCBI Taxonomy" id="160488"/>
    <lineage>
        <taxon>Bacteria</taxon>
        <taxon>Pseudomonadati</taxon>
        <taxon>Pseudomonadota</taxon>
        <taxon>Gammaproteobacteria</taxon>
        <taxon>Pseudomonadales</taxon>
        <taxon>Pseudomonadaceae</taxon>
        <taxon>Pseudomonas</taxon>
    </lineage>
</organism>